<reference key="1">
    <citation type="journal article" date="2010" name="J. Bacteriol.">
        <title>Whole genome sequences of two Xylella fastidiosa strains (M12 and M23) causing almond leaf scorch disease in California.</title>
        <authorList>
            <person name="Chen J."/>
            <person name="Xie G."/>
            <person name="Han S."/>
            <person name="Chertkov O."/>
            <person name="Sims D."/>
            <person name="Civerolo E.L."/>
        </authorList>
    </citation>
    <scope>NUCLEOTIDE SEQUENCE [LARGE SCALE GENOMIC DNA]</scope>
    <source>
        <strain>M12</strain>
    </source>
</reference>
<name>METK_XYLFM</name>
<dbReference type="EC" id="2.5.1.6" evidence="1"/>
<dbReference type="EMBL" id="CP000941">
    <property type="protein sequence ID" value="ACA12726.1"/>
    <property type="molecule type" value="Genomic_DNA"/>
</dbReference>
<dbReference type="RefSeq" id="WP_004083625.1">
    <property type="nucleotide sequence ID" value="NC_010513.1"/>
</dbReference>
<dbReference type="SMR" id="B0U4E7"/>
<dbReference type="KEGG" id="xfm:Xfasm12_1840"/>
<dbReference type="HOGENOM" id="CLU_041802_1_1_6"/>
<dbReference type="UniPathway" id="UPA00315">
    <property type="reaction ID" value="UER00080"/>
</dbReference>
<dbReference type="GO" id="GO:0005737">
    <property type="term" value="C:cytoplasm"/>
    <property type="evidence" value="ECO:0007669"/>
    <property type="project" value="UniProtKB-SubCell"/>
</dbReference>
<dbReference type="GO" id="GO:0005524">
    <property type="term" value="F:ATP binding"/>
    <property type="evidence" value="ECO:0007669"/>
    <property type="project" value="UniProtKB-UniRule"/>
</dbReference>
<dbReference type="GO" id="GO:0000287">
    <property type="term" value="F:magnesium ion binding"/>
    <property type="evidence" value="ECO:0007669"/>
    <property type="project" value="UniProtKB-UniRule"/>
</dbReference>
<dbReference type="GO" id="GO:0004478">
    <property type="term" value="F:methionine adenosyltransferase activity"/>
    <property type="evidence" value="ECO:0007669"/>
    <property type="project" value="UniProtKB-UniRule"/>
</dbReference>
<dbReference type="GO" id="GO:0006730">
    <property type="term" value="P:one-carbon metabolic process"/>
    <property type="evidence" value="ECO:0007669"/>
    <property type="project" value="UniProtKB-KW"/>
</dbReference>
<dbReference type="GO" id="GO:0006556">
    <property type="term" value="P:S-adenosylmethionine biosynthetic process"/>
    <property type="evidence" value="ECO:0007669"/>
    <property type="project" value="UniProtKB-UniRule"/>
</dbReference>
<dbReference type="CDD" id="cd18079">
    <property type="entry name" value="S-AdoMet_synt"/>
    <property type="match status" value="1"/>
</dbReference>
<dbReference type="FunFam" id="3.30.300.10:FF:000003">
    <property type="entry name" value="S-adenosylmethionine synthase"/>
    <property type="match status" value="1"/>
</dbReference>
<dbReference type="Gene3D" id="3.30.300.10">
    <property type="match status" value="3"/>
</dbReference>
<dbReference type="HAMAP" id="MF_00086">
    <property type="entry name" value="S_AdoMet_synth1"/>
    <property type="match status" value="1"/>
</dbReference>
<dbReference type="InterPro" id="IPR022631">
    <property type="entry name" value="ADOMET_SYNTHASE_CS"/>
</dbReference>
<dbReference type="InterPro" id="IPR022630">
    <property type="entry name" value="S-AdoMet_synt_C"/>
</dbReference>
<dbReference type="InterPro" id="IPR022629">
    <property type="entry name" value="S-AdoMet_synt_central"/>
</dbReference>
<dbReference type="InterPro" id="IPR022628">
    <property type="entry name" value="S-AdoMet_synt_N"/>
</dbReference>
<dbReference type="InterPro" id="IPR002133">
    <property type="entry name" value="S-AdoMet_synthetase"/>
</dbReference>
<dbReference type="InterPro" id="IPR022636">
    <property type="entry name" value="S-AdoMet_synthetase_sfam"/>
</dbReference>
<dbReference type="NCBIfam" id="TIGR01034">
    <property type="entry name" value="metK"/>
    <property type="match status" value="1"/>
</dbReference>
<dbReference type="PANTHER" id="PTHR11964">
    <property type="entry name" value="S-ADENOSYLMETHIONINE SYNTHETASE"/>
    <property type="match status" value="1"/>
</dbReference>
<dbReference type="Pfam" id="PF02773">
    <property type="entry name" value="S-AdoMet_synt_C"/>
    <property type="match status" value="1"/>
</dbReference>
<dbReference type="Pfam" id="PF02772">
    <property type="entry name" value="S-AdoMet_synt_M"/>
    <property type="match status" value="1"/>
</dbReference>
<dbReference type="Pfam" id="PF00438">
    <property type="entry name" value="S-AdoMet_synt_N"/>
    <property type="match status" value="1"/>
</dbReference>
<dbReference type="PIRSF" id="PIRSF000497">
    <property type="entry name" value="MAT"/>
    <property type="match status" value="1"/>
</dbReference>
<dbReference type="SUPFAM" id="SSF55973">
    <property type="entry name" value="S-adenosylmethionine synthetase"/>
    <property type="match status" value="3"/>
</dbReference>
<dbReference type="PROSITE" id="PS00376">
    <property type="entry name" value="ADOMET_SYNTHASE_1"/>
    <property type="match status" value="1"/>
</dbReference>
<dbReference type="PROSITE" id="PS00377">
    <property type="entry name" value="ADOMET_SYNTHASE_2"/>
    <property type="match status" value="1"/>
</dbReference>
<protein>
    <recommendedName>
        <fullName evidence="1">S-adenosylmethionine synthase</fullName>
        <shortName evidence="1">AdoMet synthase</shortName>
        <ecNumber evidence="1">2.5.1.6</ecNumber>
    </recommendedName>
    <alternativeName>
        <fullName evidence="1">MAT</fullName>
    </alternativeName>
    <alternativeName>
        <fullName evidence="1">Methionine adenosyltransferase</fullName>
    </alternativeName>
</protein>
<comment type="function">
    <text evidence="1">Catalyzes the formation of S-adenosylmethionine (AdoMet) from methionine and ATP. The overall synthetic reaction is composed of two sequential steps, AdoMet formation and the subsequent tripolyphosphate hydrolysis which occurs prior to release of AdoMet from the enzyme.</text>
</comment>
<comment type="catalytic activity">
    <reaction evidence="1">
        <text>L-methionine + ATP + H2O = S-adenosyl-L-methionine + phosphate + diphosphate</text>
        <dbReference type="Rhea" id="RHEA:21080"/>
        <dbReference type="ChEBI" id="CHEBI:15377"/>
        <dbReference type="ChEBI" id="CHEBI:30616"/>
        <dbReference type="ChEBI" id="CHEBI:33019"/>
        <dbReference type="ChEBI" id="CHEBI:43474"/>
        <dbReference type="ChEBI" id="CHEBI:57844"/>
        <dbReference type="ChEBI" id="CHEBI:59789"/>
        <dbReference type="EC" id="2.5.1.6"/>
    </reaction>
</comment>
<comment type="cofactor">
    <cofactor evidence="1">
        <name>Mg(2+)</name>
        <dbReference type="ChEBI" id="CHEBI:18420"/>
    </cofactor>
    <text evidence="1">Binds 2 divalent ions per subunit.</text>
</comment>
<comment type="cofactor">
    <cofactor evidence="1">
        <name>K(+)</name>
        <dbReference type="ChEBI" id="CHEBI:29103"/>
    </cofactor>
    <text evidence="1">Binds 1 potassium ion per subunit.</text>
</comment>
<comment type="pathway">
    <text evidence="1">Amino-acid biosynthesis; S-adenosyl-L-methionine biosynthesis; S-adenosyl-L-methionine from L-methionine: step 1/1.</text>
</comment>
<comment type="subunit">
    <text evidence="1">Homotetramer; dimer of dimers.</text>
</comment>
<comment type="subcellular location">
    <subcellularLocation>
        <location evidence="1">Cytoplasm</location>
    </subcellularLocation>
</comment>
<comment type="similarity">
    <text evidence="1">Belongs to the AdoMet synthase family.</text>
</comment>
<keyword id="KW-0067">ATP-binding</keyword>
<keyword id="KW-0963">Cytoplasm</keyword>
<keyword id="KW-0460">Magnesium</keyword>
<keyword id="KW-0479">Metal-binding</keyword>
<keyword id="KW-0547">Nucleotide-binding</keyword>
<keyword id="KW-0554">One-carbon metabolism</keyword>
<keyword id="KW-0630">Potassium</keyword>
<keyword id="KW-0808">Transferase</keyword>
<organism>
    <name type="scientific">Xylella fastidiosa (strain M12)</name>
    <dbReference type="NCBI Taxonomy" id="405440"/>
    <lineage>
        <taxon>Bacteria</taxon>
        <taxon>Pseudomonadati</taxon>
        <taxon>Pseudomonadota</taxon>
        <taxon>Gammaproteobacteria</taxon>
        <taxon>Lysobacterales</taxon>
        <taxon>Lysobacteraceae</taxon>
        <taxon>Xylella</taxon>
    </lineage>
</organism>
<accession>B0U4E7</accession>
<evidence type="ECO:0000255" key="1">
    <source>
        <dbReference type="HAMAP-Rule" id="MF_00086"/>
    </source>
</evidence>
<feature type="chain" id="PRO_1000093103" description="S-adenosylmethionine synthase">
    <location>
        <begin position="1"/>
        <end position="403"/>
    </location>
</feature>
<feature type="region of interest" description="Flexible loop" evidence="1">
    <location>
        <begin position="99"/>
        <end position="109"/>
    </location>
</feature>
<feature type="binding site" description="in other chain" evidence="1">
    <location>
        <position position="15"/>
    </location>
    <ligand>
        <name>ATP</name>
        <dbReference type="ChEBI" id="CHEBI:30616"/>
        <note>ligand shared between two neighboring subunits</note>
    </ligand>
</feature>
<feature type="binding site" evidence="1">
    <location>
        <position position="17"/>
    </location>
    <ligand>
        <name>Mg(2+)</name>
        <dbReference type="ChEBI" id="CHEBI:18420"/>
    </ligand>
</feature>
<feature type="binding site" evidence="1">
    <location>
        <position position="43"/>
    </location>
    <ligand>
        <name>K(+)</name>
        <dbReference type="ChEBI" id="CHEBI:29103"/>
    </ligand>
</feature>
<feature type="binding site" description="in other chain" evidence="1">
    <location>
        <position position="56"/>
    </location>
    <ligand>
        <name>L-methionine</name>
        <dbReference type="ChEBI" id="CHEBI:57844"/>
        <note>ligand shared between two neighboring subunits</note>
    </ligand>
</feature>
<feature type="binding site" description="in other chain" evidence="1">
    <location>
        <position position="99"/>
    </location>
    <ligand>
        <name>L-methionine</name>
        <dbReference type="ChEBI" id="CHEBI:57844"/>
        <note>ligand shared between two neighboring subunits</note>
    </ligand>
</feature>
<feature type="binding site" description="in other chain" evidence="1">
    <location>
        <begin position="166"/>
        <end position="168"/>
    </location>
    <ligand>
        <name>ATP</name>
        <dbReference type="ChEBI" id="CHEBI:30616"/>
        <note>ligand shared between two neighboring subunits</note>
    </ligand>
</feature>
<feature type="binding site" description="in other chain" evidence="1">
    <location>
        <begin position="232"/>
        <end position="233"/>
    </location>
    <ligand>
        <name>ATP</name>
        <dbReference type="ChEBI" id="CHEBI:30616"/>
        <note>ligand shared between two neighboring subunits</note>
    </ligand>
</feature>
<feature type="binding site" evidence="1">
    <location>
        <position position="241"/>
    </location>
    <ligand>
        <name>ATP</name>
        <dbReference type="ChEBI" id="CHEBI:30616"/>
        <note>ligand shared between two neighboring subunits</note>
    </ligand>
</feature>
<feature type="binding site" evidence="1">
    <location>
        <position position="241"/>
    </location>
    <ligand>
        <name>L-methionine</name>
        <dbReference type="ChEBI" id="CHEBI:57844"/>
        <note>ligand shared between two neighboring subunits</note>
    </ligand>
</feature>
<feature type="binding site" description="in other chain" evidence="1">
    <location>
        <begin position="247"/>
        <end position="248"/>
    </location>
    <ligand>
        <name>ATP</name>
        <dbReference type="ChEBI" id="CHEBI:30616"/>
        <note>ligand shared between two neighboring subunits</note>
    </ligand>
</feature>
<feature type="binding site" evidence="1">
    <location>
        <position position="264"/>
    </location>
    <ligand>
        <name>ATP</name>
        <dbReference type="ChEBI" id="CHEBI:30616"/>
        <note>ligand shared between two neighboring subunits</note>
    </ligand>
</feature>
<feature type="binding site" evidence="1">
    <location>
        <position position="268"/>
    </location>
    <ligand>
        <name>ATP</name>
        <dbReference type="ChEBI" id="CHEBI:30616"/>
        <note>ligand shared between two neighboring subunits</note>
    </ligand>
</feature>
<feature type="binding site" description="in other chain" evidence="1">
    <location>
        <position position="272"/>
    </location>
    <ligand>
        <name>L-methionine</name>
        <dbReference type="ChEBI" id="CHEBI:57844"/>
        <note>ligand shared between two neighboring subunits</note>
    </ligand>
</feature>
<gene>
    <name evidence="1" type="primary">metK</name>
    <name type="ordered locus">Xfasm12_1840</name>
</gene>
<proteinExistence type="inferred from homology"/>
<sequence length="403" mass="43592">MSSYLFTSESVSEGHPDKVADQISDAVLDAILVQDPRARVACETMVKTGVAIIAGEITTSAWVDLEALTRKVIVDIGYNSSDVGFDGATCGVLNLIGKQSPDINQGVDRKKAEEQGAGDQGLMFGYATNETDSYMPAAIHISHRLVEQQAKIRKKSNSPLPWLRPDAKAQITLRYEDGVASAIDAVVLSTQHDPGIKQKDLVEAVREEILKPVLPSKWLHKGTKFHINPTGKFVIGGPVGDCGLTGRKIIVDTYGGSARHGGGAFSGKDPSKVDRSASYAVRYVAKNVVAAGLADRCEVQVSYAIGVAEPISISVTTFGTGKVPDDKIEKLIRQHFDLRPYGIIKMLDLIHPIYQPSASYGHFGRKPREFAYTNSNGGRVVATAFSWEKIDKAEVLRADAKLK</sequence>